<reference key="1">
    <citation type="journal article" date="2010" name="BMC Genomics">
        <title>Comparative venom gland transcriptome analysis of the scorpion Lychas mucronatus reveals intraspecific toxic gene diversity and new venomous components.</title>
        <authorList>
            <person name="Zhao R."/>
            <person name="Ma Y."/>
            <person name="He Y."/>
            <person name="Di Z."/>
            <person name="Wu Y.-L."/>
            <person name="Cao Z.-J."/>
            <person name="Li W.-X."/>
        </authorList>
    </citation>
    <scope>NUCLEOTIDE SEQUENCE [MRNA]</scope>
    <source>
        <strain>Yunnan</strain>
        <tissue>Venom gland</tissue>
    </source>
</reference>
<proteinExistence type="inferred from homology"/>
<comment type="function">
    <text evidence="2">The heterodimer non-edited LVP1 induces lipolysis in rat adipocytes. Induction of lipolysis by LVP1 appears to be mediated through the beta-2 adrenergic receptor pathway (ADRB2) (By similarity).</text>
</comment>
<comment type="function">
    <text evidence="2">The edited BmKBTx-like, similar to beta-toxins, may modulate voltage-gated sodium channels (Nav) and may block voltage-gated potassium channels (Kv).</text>
</comment>
<comment type="subunit">
    <text>Monomer (edited version) and heterodimer (non-edited version) of this alpha chain and a beta chain (AC P0CI43).</text>
</comment>
<comment type="subcellular location">
    <subcellularLocation>
        <location evidence="6">Secreted</location>
    </subcellularLocation>
</comment>
<comment type="tissue specificity">
    <text evidence="6">Expressed by the venom gland.</text>
</comment>
<comment type="domain">
    <text evidence="5">Has the structural arrangement of an alpha-helix connected to antiparallel beta-sheets by disulfide bonds (CS-alpha/beta).</text>
</comment>
<comment type="RNA editing">
    <location>
        <position position="76" evidence="1"/>
    </location>
    <text evidence="1">The stop codon (UGA) at position 76 is created by RNA editing.</text>
</comment>
<comment type="similarity">
    <text evidence="5">Belongs to the long (3 C-C) scorpion toxin superfamily.</text>
</comment>
<dbReference type="EMBL" id="GT028572">
    <property type="status" value="NOT_ANNOTATED_CDS"/>
    <property type="molecule type" value="mRNA"/>
</dbReference>
<dbReference type="SMR" id="P0CI44"/>
<dbReference type="GO" id="GO:0005576">
    <property type="term" value="C:extracellular region"/>
    <property type="evidence" value="ECO:0007669"/>
    <property type="project" value="UniProtKB-SubCell"/>
</dbReference>
<dbReference type="GO" id="GO:0015459">
    <property type="term" value="F:potassium channel regulator activity"/>
    <property type="evidence" value="ECO:0007669"/>
    <property type="project" value="UniProtKB-KW"/>
</dbReference>
<dbReference type="GO" id="GO:0019871">
    <property type="term" value="F:sodium channel inhibitor activity"/>
    <property type="evidence" value="ECO:0007669"/>
    <property type="project" value="InterPro"/>
</dbReference>
<dbReference type="GO" id="GO:0090729">
    <property type="term" value="F:toxin activity"/>
    <property type="evidence" value="ECO:0007669"/>
    <property type="project" value="UniProtKB-KW"/>
</dbReference>
<dbReference type="CDD" id="cd23106">
    <property type="entry name" value="neurotoxins_LC_scorpion"/>
    <property type="match status" value="1"/>
</dbReference>
<dbReference type="Gene3D" id="3.30.30.10">
    <property type="entry name" value="Knottin, scorpion toxin-like"/>
    <property type="match status" value="1"/>
</dbReference>
<dbReference type="InterPro" id="IPR044062">
    <property type="entry name" value="LCN-type_CS_alpha_beta_dom"/>
</dbReference>
<dbReference type="InterPro" id="IPR036574">
    <property type="entry name" value="Scorpion_toxin-like_sf"/>
</dbReference>
<dbReference type="InterPro" id="IPR002061">
    <property type="entry name" value="Scorpion_toxinL/defensin"/>
</dbReference>
<dbReference type="Pfam" id="PF00537">
    <property type="entry name" value="Toxin_3"/>
    <property type="match status" value="1"/>
</dbReference>
<dbReference type="SUPFAM" id="SSF57095">
    <property type="entry name" value="Scorpion toxin-like"/>
    <property type="match status" value="1"/>
</dbReference>
<dbReference type="PROSITE" id="PS51863">
    <property type="entry name" value="LCN_CSAB"/>
    <property type="match status" value="1"/>
</dbReference>
<keyword id="KW-1015">Disulfide bond</keyword>
<keyword id="KW-1213">G-protein coupled receptor impairing toxin</keyword>
<keyword id="KW-0872">Ion channel impairing toxin</keyword>
<keyword id="KW-0528">Neurotoxin</keyword>
<keyword id="KW-0632">Potassium channel impairing toxin</keyword>
<keyword id="KW-0691">RNA editing</keyword>
<keyword id="KW-0964">Secreted</keyword>
<keyword id="KW-0732">Signal</keyword>
<keyword id="KW-0800">Toxin</keyword>
<keyword id="KW-1220">Voltage-gated potassium channel impairing toxin</keyword>
<keyword id="KW-0738">Voltage-gated sodium channel impairing toxin</keyword>
<evidence type="ECO:0000250" key="1"/>
<evidence type="ECO:0000250" key="2">
    <source>
        <dbReference type="UniProtKB" id="P84810"/>
    </source>
</evidence>
<evidence type="ECO:0000255" key="3"/>
<evidence type="ECO:0000255" key="4">
    <source>
        <dbReference type="PROSITE-ProRule" id="PRU01210"/>
    </source>
</evidence>
<evidence type="ECO:0000305" key="5"/>
<evidence type="ECO:0000305" key="6">
    <source>
    </source>
</evidence>
<protein>
    <recommendedName>
        <fullName>Lipolysis-activating peptide 1-alpha chain</fullName>
        <shortName>LVP1-alpha</shortName>
    </recommendedName>
    <component>
        <recommendedName>
            <fullName>Neurotoxin BmKBTx-like</fullName>
        </recommendedName>
    </component>
</protein>
<accession>P0CI44</accession>
<organism>
    <name type="scientific">Lychas mucronatus</name>
    <name type="common">Chinese swimming scorpion</name>
    <dbReference type="NCBI Taxonomy" id="172552"/>
    <lineage>
        <taxon>Eukaryota</taxon>
        <taxon>Metazoa</taxon>
        <taxon>Ecdysozoa</taxon>
        <taxon>Arthropoda</taxon>
        <taxon>Chelicerata</taxon>
        <taxon>Arachnida</taxon>
        <taxon>Scorpiones</taxon>
        <taxon>Buthida</taxon>
        <taxon>Buthoidea</taxon>
        <taxon>Buthidae</taxon>
        <taxon>Lychas</taxon>
    </lineage>
</organism>
<feature type="signal peptide" evidence="3">
    <location>
        <begin position="1"/>
        <end position="21"/>
    </location>
</feature>
<feature type="chain" id="PRO_0000403883" description="Lipolysis-activating peptide 1-alpha chain">
    <location>
        <begin position="22"/>
        <end position="83"/>
    </location>
</feature>
<feature type="chain" id="PRO_0000403884" description="Neurotoxin BmKBTx-like" evidence="1">
    <location>
        <begin position="22"/>
        <end position="75"/>
    </location>
</feature>
<feature type="domain" description="LCN-type CS-alpha/beta" evidence="4">
    <location>
        <begin position="22"/>
        <end position="83"/>
    </location>
</feature>
<feature type="disulfide bond" evidence="4">
    <location>
        <begin position="35"/>
        <end position="58"/>
    </location>
</feature>
<feature type="disulfide bond" evidence="4">
    <location>
        <begin position="44"/>
        <end position="63"/>
    </location>
</feature>
<feature type="disulfide bond" evidence="4">
    <location>
        <begin position="48"/>
        <end position="65"/>
    </location>
</feature>
<feature type="disulfide bond" description="Interchain (with C-86 in LVP1 chain beta)" evidence="1">
    <location>
        <position position="83"/>
    </location>
</feature>
<name>LVPAY_LYCMC</name>
<sequence>MNIILFYFMPILISLPGLLASGTYPNDVYGLTYDCGKLGENEHCLKICKIHGVEYGYCYGWRCWCDKLSDKNKLFWDVYKEHC</sequence>